<gene>
    <name evidence="14" type="primary">psrP</name>
    <name type="ordered locus">SP_1772</name>
</gene>
<keyword id="KW-0002">3D-structure</keyword>
<keyword id="KW-0130">Cell adhesion</keyword>
<keyword id="KW-0134">Cell wall</keyword>
<keyword id="KW-0238">DNA-binding</keyword>
<keyword id="KW-0325">Glycoprotein</keyword>
<keyword id="KW-0572">Peptidoglycan-anchor</keyword>
<keyword id="KW-1185">Reference proteome</keyword>
<keyword id="KW-0677">Repeat</keyword>
<keyword id="KW-0964">Secreted</keyword>
<keyword id="KW-0732">Signal</keyword>
<keyword id="KW-0843">Virulence</keyword>
<protein>
    <recommendedName>
        <fullName evidence="14">Pneumococcal serine-rich repeat protein</fullName>
        <shortName evidence="14">PsrP</shortName>
    </recommendedName>
    <alternativeName>
        <fullName evidence="18">Adhesin PsrP</fullName>
    </alternativeName>
    <alternativeName>
        <fullName>Serine-rich repeat protein PsrP</fullName>
    </alternativeName>
</protein>
<proteinExistence type="evidence at protein level"/>
<dbReference type="EMBL" id="AE005672">
    <property type="protein sequence ID" value="AAK75846.1"/>
    <property type="molecule type" value="Genomic_DNA"/>
</dbReference>
<dbReference type="PDB" id="3ZGH">
    <property type="method" value="X-ray"/>
    <property type="resolution" value="2.00 A"/>
    <property type="chains" value="A=187-385"/>
</dbReference>
<dbReference type="PDB" id="3ZGI">
    <property type="method" value="X-ray"/>
    <property type="resolution" value="2.25 A"/>
    <property type="chains" value="A/B/C=187-385"/>
</dbReference>
<dbReference type="PDB" id="5JUI">
    <property type="method" value="X-ray"/>
    <property type="resolution" value="2.10 A"/>
    <property type="chains" value="A/B/C=187-378"/>
</dbReference>
<dbReference type="PDBsum" id="3ZGH"/>
<dbReference type="PDBsum" id="3ZGI"/>
<dbReference type="PDBsum" id="5JUI"/>
<dbReference type="SASBDB" id="A0A0H2URK1"/>
<dbReference type="SMR" id="A0A0H2URK1"/>
<dbReference type="GlyCosmos" id="A0A0H2URK1">
    <property type="glycosylation" value="13 sites, No reported glycans"/>
</dbReference>
<dbReference type="iPTMnet" id="A0A0H2URK1"/>
<dbReference type="PaxDb" id="170187-SP_1772"/>
<dbReference type="EnsemblBacteria" id="AAK75846">
    <property type="protein sequence ID" value="AAK75846"/>
    <property type="gene ID" value="SP_1772"/>
</dbReference>
<dbReference type="KEGG" id="spn:SP_1772"/>
<dbReference type="EvolutionaryTrace" id="A0A0H2URK1"/>
<dbReference type="Proteomes" id="UP000000585">
    <property type="component" value="Chromosome"/>
</dbReference>
<dbReference type="GO" id="GO:0009986">
    <property type="term" value="C:cell surface"/>
    <property type="evidence" value="ECO:0007669"/>
    <property type="project" value="UniProtKB-SubCell"/>
</dbReference>
<dbReference type="GO" id="GO:0005576">
    <property type="term" value="C:extracellular region"/>
    <property type="evidence" value="ECO:0007669"/>
    <property type="project" value="UniProtKB-KW"/>
</dbReference>
<dbReference type="GO" id="GO:0009275">
    <property type="term" value="C:Gram-positive-bacterium-type cell wall"/>
    <property type="evidence" value="ECO:0000314"/>
    <property type="project" value="UniProtKB"/>
</dbReference>
<dbReference type="GO" id="GO:0003677">
    <property type="term" value="F:DNA binding"/>
    <property type="evidence" value="ECO:0007669"/>
    <property type="project" value="UniProtKB-KW"/>
</dbReference>
<dbReference type="GO" id="GO:0007155">
    <property type="term" value="P:cell adhesion"/>
    <property type="evidence" value="ECO:0007669"/>
    <property type="project" value="UniProtKB-KW"/>
</dbReference>
<dbReference type="GO" id="GO:0044010">
    <property type="term" value="P:single-species biofilm formation"/>
    <property type="evidence" value="ECO:0000314"/>
    <property type="project" value="UniProtKB"/>
</dbReference>
<dbReference type="GO" id="GO:0052031">
    <property type="term" value="P:symbiont-mediated perturbation of host defense response"/>
    <property type="evidence" value="ECO:0000315"/>
    <property type="project" value="UniProtKB"/>
</dbReference>
<dbReference type="InterPro" id="IPR050252">
    <property type="entry name" value="Beta/Gamma-Crystallin"/>
</dbReference>
<dbReference type="InterPro" id="IPR019931">
    <property type="entry name" value="LPXTG_anchor"/>
</dbReference>
<dbReference type="InterPro" id="IPR026465">
    <property type="entry name" value="Ser_adhes_glycop_N"/>
</dbReference>
<dbReference type="NCBIfam" id="TIGR01167">
    <property type="entry name" value="LPXTG_anchor"/>
    <property type="match status" value="1"/>
</dbReference>
<dbReference type="NCBIfam" id="TIGR04224">
    <property type="entry name" value="ser_adhes_Nterm"/>
    <property type="match status" value="1"/>
</dbReference>
<dbReference type="PANTHER" id="PTHR11818">
    <property type="entry name" value="BETA/GAMMA CRYSTALLIN"/>
    <property type="match status" value="1"/>
</dbReference>
<dbReference type="PANTHER" id="PTHR11818:SF42">
    <property type="entry name" value="VOLTAGE-GATED HYDROGEN CHANNEL 1"/>
    <property type="match status" value="1"/>
</dbReference>
<dbReference type="Pfam" id="PF00746">
    <property type="entry name" value="Gram_pos_anchor"/>
    <property type="match status" value="1"/>
</dbReference>
<dbReference type="PROSITE" id="PS50847">
    <property type="entry name" value="GRAM_POS_ANCHORING"/>
    <property type="match status" value="1"/>
</dbReference>
<evidence type="ECO:0000255" key="1">
    <source>
        <dbReference type="PROSITE-ProRule" id="PRU00477"/>
    </source>
</evidence>
<evidence type="ECO:0000256" key="2">
    <source>
        <dbReference type="SAM" id="MobiDB-lite"/>
    </source>
</evidence>
<evidence type="ECO:0000269" key="3">
    <source>
    </source>
</evidence>
<evidence type="ECO:0000269" key="4">
    <source>
    </source>
</evidence>
<evidence type="ECO:0000269" key="5">
    <source>
    </source>
</evidence>
<evidence type="ECO:0000269" key="6">
    <source>
    </source>
</evidence>
<evidence type="ECO:0000269" key="7">
    <source>
    </source>
</evidence>
<evidence type="ECO:0000269" key="8">
    <source>
    </source>
</evidence>
<evidence type="ECO:0000269" key="9">
    <source>
    </source>
</evidence>
<evidence type="ECO:0000269" key="10">
    <source>
    </source>
</evidence>
<evidence type="ECO:0000269" key="11">
    <source>
    </source>
</evidence>
<evidence type="ECO:0000269" key="12">
    <source>
    </source>
</evidence>
<evidence type="ECO:0000303" key="13">
    <source>
    </source>
</evidence>
<evidence type="ECO:0000303" key="14">
    <source>
    </source>
</evidence>
<evidence type="ECO:0000303" key="15">
    <source>
    </source>
</evidence>
<evidence type="ECO:0000303" key="16">
    <source>
    </source>
</evidence>
<evidence type="ECO:0000303" key="17">
    <source>
    </source>
</evidence>
<evidence type="ECO:0000305" key="18"/>
<evidence type="ECO:0000305" key="19">
    <source>
    </source>
</evidence>
<evidence type="ECO:0000305" key="20">
    <source>
    </source>
</evidence>
<evidence type="ECO:0000305" key="21">
    <source>
    </source>
</evidence>
<evidence type="ECO:0000305" key="22">
    <source>
    </source>
</evidence>
<evidence type="ECO:0007744" key="23">
    <source>
        <dbReference type="PDB" id="3ZGH"/>
    </source>
</evidence>
<evidence type="ECO:0007744" key="24">
    <source>
        <dbReference type="PDB" id="3ZGI"/>
    </source>
</evidence>
<evidence type="ECO:0007744" key="25">
    <source>
        <dbReference type="PDB" id="5JUI"/>
    </source>
</evidence>
<evidence type="ECO:0007829" key="26">
    <source>
        <dbReference type="PDB" id="3ZGH"/>
    </source>
</evidence>
<evidence type="ECO:0007829" key="27">
    <source>
        <dbReference type="PDB" id="3ZGI"/>
    </source>
</evidence>
<organism>
    <name type="scientific">Streptococcus pneumoniae serotype 4 (strain ATCC BAA-334 / TIGR4)</name>
    <dbReference type="NCBI Taxonomy" id="170187"/>
    <lineage>
        <taxon>Bacteria</taxon>
        <taxon>Bacillati</taxon>
        <taxon>Bacillota</taxon>
        <taxon>Bacilli</taxon>
        <taxon>Lactobacillales</taxon>
        <taxon>Streptococcaceae</taxon>
        <taxon>Streptococcus</taxon>
    </lineage>
</organism>
<sequence>MTETVEDKVSHSITGLDILKGIVAAGAVISGTVATQTKVFTNESAVLEKTVEKTDALATNDTVVLGTISTSNSASSTSLSASESASTSASESASTSASTSASTSASESASTSASTSISASSTVVGSQTAAATEATAKKVEEDRKKPASDYVASVTNVNLQSYAKRRKRSVDSIEQLLASIKNAAVFSGNTIVNGAPAINASLNIAKSETKVYTGEGVDSVYRVPIYYKLKVTNDGSKLTFTYTVTYVNPKTNDLGNISSMRPGYSIYNSGTSTQTMLTLGSDLGKPSGVKNYITDKNGRQVLSYNTSTMTTQGSGYTWGNGAQMNGFFAKKGYGLTSSWTVPITGTDTSFTFTPYAARTDRIGINYFNGGGKVVESSTTSQSLSQSKSLSVSASQSASASASTSASASASTSASASASTSASASASTSASVSASTSASASASTSASASASTSASESASTSASASASTSASASASTSASASASTSASESASTSASASASTSASESASTSASASASTSASASASTSASGSASTSTSASASTSASASASTSASASASISASESASTSASESASTSTSASASTSASESASTSASASASTSASASASTSASASASTSASASTSASESASTSASASASTSASASASTSASASASTSASASASTSASVSASTSASASASTSASASASTSASESASTSASASASTSASASASTSASASASTSASASASTSASASASTSASESASTSASASASTSASASASTSASASASTSASASASTSASASASISASESASTSASASASTSASASASTSASASASTSASESASTSASASASTSASASASTSASASASTSASASASTSASASASTSASASASTSASESASTSASASASTSASESASTSASASASTSASASASTSASASASTSASASASTSASASASTSASASASTSASASTSASESASTSASASASTSASASASTSASASASTSASESASTSASASASTSASASASTSASASASTSASASASTSASASASISASESASTSASASASTSASVSASTSASASASTSASESASTSASASASTSASESASTSASASASTSASASASISASESASTSASASASTSASASASTSASASASTSASESASTSTSASASTSASESASTSASASASTSASASASTSASASASTSASASASTSASASTSASESASTSASASASTSASASASTSASASASTSASASASTSASASASTSASASASTSASASASTSASASASTSASESASTSASASASTSASASASTSASASASTSASASASTSASVSASTSASESASTSASASASTSASASASTSASESASTSASASASTSASESASTSASASASTSASASASTSASASASTSASASASTSASASASTSASASASTSASASASTSASASASTSASASASTSASASASTSASASASTSASASASTSASASASISASESASTSASASASTSASASASTSASVSASTSASASASTSASASASISASESASTSASASASTSASASASTSASASASTSASASASISASESASTSASASASTSASASASTSASASASTSASASASTSASASASTSASASASTSASASASTSASASASTSASASASTSASESASTSASASASTSASASASTSASASASTSASVSASTSASESASTSASASASTSASASASTSASASASTSASESASTSASASASTSASASASTSASESASTSASASASTSASASASTSASASASTSASASASASTSASASASTSASASASTSASASASISASESASTSASESASTSTSASASTSASESASTSASASASTSASASASTSASASASTSASASTSASESASTSASASASTSASASASTSASASASTSASASASTSASASASTSASVSASTSASASASTSASASASTSASESASTSASASASTSASASASTSASASASTSASASASTSASASASTSASESASTSASASASTSASASASTSASASASTSASASASTSASASASISASESASTSASASASTSASASASTSASASASTSASESASTSASASASTSASASASTSASASASTSASASASTSASASASTSASASASTSASESASTSASASASTSASESASTSASASASTSASASASTSASASASTSASASASTSASASASTSASASASTSASASTSASESASTSASASASTSASASASTSASASASTSASESASTSASASASTSASASASTSASASASTSASASASTSASASASISASESASTSASASASTSASVSASTSASASASTSASESASTSASASASTSASESASTSASASASTSASASASISASESASTSASASASTSASASASTSASASASTSASESASTSTSASASTSASESASTSASASASTSASASASTSASASASTSASASASTSASASTSASESASTSASASASTSASASASTSASASASTSASASASTSASASASTSASASASTSASASASTSASASASTSASASASTSASASASTSASASASTSASESASTSASASASTSASASASTSASASASTSASVSASTSASESASTSASASASTSASASASTSASASASTSASESASTSASASASTSASASASTSASESASTSASASASTSASASASTSASASASTSASASASASTSASASASTSASASASTSASASASISASESASTSASASASASTSASASASTSASASASTSASASASISASESASTSASESASTSTSASASTSASESASTSASASASTSASASASTSASASASTSASASTSASESASTSASASASTSASASASTSASASASTSASASASTSASASASTSASVSASTSASASASTSASASASTSASESASTSASASTSASESASTSASASASTSASASASTSASASASTSASESASTSASASASTSASASASTSASESASTSASASASTSASASASTSASASASTSASESASTSASASASTSASESASTSASASASTSASASASTSASGSASTSTSASASTSASASASTSASASASISASESASTSASESASTSTSASASTSASESASTSASASASTSASASASTSASASASTSASASTSASESASTSASASASTSASASASTSASASASTSASASASTSASVSASTSASASASTSASASASTSASESASTSASASASTSASASASTSASASASTSASASASTSASASASTSASESASTSASASASTSASASASTSASASASTSASASASTSASASASISASESASTSASASASTSASASASTSASASASTSASESASTSASASASTSASASASTSASASASTSASASASTSASASASTSASASASTSASESASTSASASASTSASESASTSASASASTSASASASTSASASASTSASASASTSASASASTSASASASTSASASTSASESASTSASASASTSASASASTSASASASTSASESASTSASASASTSASASASTSASASASTSASASASTSASASASISASESASTSASASASTSASVSASTSASASASTSASESASTSASASASTSASESASTSASASASTSASASASISASESASTSASASASTSASASASTSASASASTSASESASTSTSASASTSASESASTSASASASTSASASASTSASASASTSASASASTSASASTSASESASTSASASASTSASASASTSASASASTSASASASTSASASASTSASASASTSASASASTSASASASTSASESASTSASASASTSASASASTSASASASTSASASASTSASVSASTSASESASTSASASASTSASASASTSASESASTSASASASTSASESASTSASASASTSASASASTSASASASTSASASASTSASASASTSASASASTSASASASTSASASASTSASASASTSASASASTSASASASTSASASASTSASASASISASESASTSASASASTSASASASTSASVSASTSASASASTSASASASISASESASTSASASASTSASASASTSASASASTSASASASISASESASTSASASASTSASASASTSASASASTSASASASTSASASASTSASASASTSASASASTSASASASTSASASASTSASESASTSASASASTSASASASISASESASTSASASASTSASASASTSASASASTSASESASTSTSASASTSASESASTSASASASTSASASASTSASASASTSASASASTSASASTSASESASTSASASASTSASASASTSASASASTSASASASTSASASASTSASASASTSASASASTSASASASTSASESASTSASASASTSASASASTSASASASTSASASASTSASVSASTSASESASTSASASASTSASASASTSASESASTSASASASTSASESASTSASASASTSASASASTSASASASTSASASASTSASASASTSASASASTSASASASTSASASASTSASASASTSASASASTSASASASTSASASASTSASASASISASESASTSASASASTSASASASTSASVSASTSASASASTSASASASISASESASTSASASASTSASASASTSASASASTSASASASISASESASTSASASASTSASASASTSASASASTSASASASTSASASASTSASASASTSASASASTSASASASTSASASASTSASASASTSASASASTSASASASTSASASASTSASASASTSVSNSANHSNSQVGNTSGSTGKSQKELPNTGTESSIGSVLLGVLAAVTGIGLVAKRRKRDEEE</sequence>
<feature type="signal peptide" evidence="19">
    <location>
        <begin position="1"/>
        <end position="72"/>
    </location>
</feature>
<feature type="chain" id="PRO_0000447031" description="Pneumococcal serine-rich repeat protein">
    <location>
        <begin position="73"/>
        <end position="4776"/>
    </location>
</feature>
<feature type="propeptide" id="PRO_0000447032" description="Removed by sortase" evidence="1">
    <location>
        <begin position="4744"/>
        <end position="4776"/>
    </location>
</feature>
<feature type="region of interest" description="Serine-rich repeat region 1, SRR1" evidence="14">
    <location>
        <begin position="73"/>
        <end position="121"/>
    </location>
</feature>
<feature type="region of interest" description="Disordered" evidence="2">
    <location>
        <begin position="86"/>
        <end position="112"/>
    </location>
</feature>
<feature type="region of interest" description="Basic region, BR" evidence="14">
    <location>
        <begin position="122"/>
        <end position="394"/>
    </location>
</feature>
<feature type="region of interest" description="Self aggregating domain" evidence="7">
    <location>
        <begin position="122"/>
        <end position="166"/>
    </location>
</feature>
<feature type="region of interest" description="Keratin 10-binding domain, cell-type specific binding to lung-derived cells" evidence="6">
    <location>
        <begin position="273"/>
        <end position="341"/>
    </location>
</feature>
<feature type="region of interest" description="Serine-rich repeat region 2, SRR2" evidence="14">
    <location>
        <begin position="395"/>
        <end position="4712"/>
    </location>
</feature>
<feature type="region of interest" description="Disordered" evidence="2">
    <location>
        <begin position="481"/>
        <end position="627"/>
    </location>
</feature>
<feature type="region of interest" description="Disordered" evidence="2">
    <location>
        <begin position="861"/>
        <end position="889"/>
    </location>
</feature>
<feature type="region of interest" description="Disordered" evidence="2">
    <location>
        <begin position="925"/>
        <end position="965"/>
    </location>
</feature>
<feature type="region of interest" description="Disordered" evidence="2">
    <location>
        <begin position="1052"/>
        <end position="1085"/>
    </location>
</feature>
<feature type="region of interest" description="Disordered" evidence="2">
    <location>
        <begin position="1123"/>
        <end position="1153"/>
    </location>
</feature>
<feature type="region of interest" description="Disordered" evidence="2">
    <location>
        <begin position="1171"/>
        <end position="1199"/>
    </location>
</feature>
<feature type="region of interest" description="Disordered" evidence="2">
    <location>
        <begin position="1311"/>
        <end position="1357"/>
    </location>
</feature>
<feature type="region of interest" description="Disordered" evidence="2">
    <location>
        <begin position="1671"/>
        <end position="1731"/>
    </location>
</feature>
<feature type="region of interest" description="Disordered" evidence="2">
    <location>
        <begin position="1792"/>
        <end position="1863"/>
    </location>
</feature>
<feature type="region of interest" description="Disordered" evidence="2">
    <location>
        <begin position="2105"/>
        <end position="2133"/>
    </location>
</feature>
<feature type="region of interest" description="Disordered" evidence="2">
    <location>
        <begin position="2169"/>
        <end position="2209"/>
    </location>
</feature>
<feature type="region of interest" description="Disordered" evidence="2">
    <location>
        <begin position="2296"/>
        <end position="2329"/>
    </location>
</feature>
<feature type="region of interest" description="Disordered" evidence="2">
    <location>
        <begin position="2367"/>
        <end position="2397"/>
    </location>
</feature>
<feature type="region of interest" description="Disordered" evidence="2">
    <location>
        <begin position="2415"/>
        <end position="2443"/>
    </location>
</feature>
<feature type="region of interest" description="Disordered" evidence="2">
    <location>
        <begin position="2571"/>
        <end position="2631"/>
    </location>
</feature>
<feature type="region of interest" description="Disordered" evidence="2">
    <location>
        <begin position="2737"/>
        <end position="2805"/>
    </location>
</feature>
<feature type="region of interest" description="Disordered" evidence="2">
    <location>
        <begin position="2855"/>
        <end position="3113"/>
    </location>
</feature>
<feature type="region of interest" description="Disordered" evidence="2">
    <location>
        <begin position="3347"/>
        <end position="3375"/>
    </location>
</feature>
<feature type="region of interest" description="Disordered" evidence="2">
    <location>
        <begin position="3411"/>
        <end position="3451"/>
    </location>
</feature>
<feature type="region of interest" description="Disordered" evidence="2">
    <location>
        <begin position="3538"/>
        <end position="3571"/>
    </location>
</feature>
<feature type="region of interest" description="Disordered" evidence="2">
    <location>
        <begin position="3609"/>
        <end position="3639"/>
    </location>
</feature>
<feature type="region of interest" description="Disordered" evidence="2">
    <location>
        <begin position="3657"/>
        <end position="3685"/>
    </location>
</feature>
<feature type="region of interest" description="Disordered" evidence="2">
    <location>
        <begin position="3797"/>
        <end position="3843"/>
    </location>
</feature>
<feature type="region of interest" description="Disordered" evidence="2">
    <location>
        <begin position="4167"/>
        <end position="4197"/>
    </location>
</feature>
<feature type="region of interest" description="Disordered" evidence="2">
    <location>
        <begin position="4215"/>
        <end position="4243"/>
    </location>
</feature>
<feature type="region of interest" description="Disordered" evidence="2">
    <location>
        <begin position="4355"/>
        <end position="4401"/>
    </location>
</feature>
<feature type="region of interest" description="Disordered" evidence="2">
    <location>
        <begin position="4706"/>
        <end position="4747"/>
    </location>
</feature>
<feature type="short sequence motif" description="Host furin cleavage recognition" evidence="10">
    <location>
        <begin position="164"/>
        <end position="168"/>
    </location>
</feature>
<feature type="short sequence motif" description="LPXTG sorting signal" evidence="1">
    <location>
        <begin position="4740"/>
        <end position="4744"/>
    </location>
</feature>
<feature type="compositionally biased region" description="Polar residues" evidence="2">
    <location>
        <begin position="4715"/>
        <end position="4747"/>
    </location>
</feature>
<feature type="modified residue" description="Pentaglycyl murein peptidoglycan amidated threonine" evidence="1">
    <location>
        <position position="4743"/>
    </location>
</feature>
<feature type="glycosylation site" description="O-linked (GlcNAc...) serine" evidence="21 22">
    <location>
        <position position="73"/>
    </location>
</feature>
<feature type="glycosylation site" description="O-linked (GlcNAc...) serine" evidence="21 22">
    <location>
        <position position="75"/>
    </location>
</feature>
<feature type="glycosylation site" description="O-linked (GlcNAc...) serine" evidence="21 22">
    <location>
        <position position="76"/>
    </location>
</feature>
<feature type="glycosylation site" description="O-linked (GlcNAc...) serine" evidence="21 22">
    <location>
        <position position="78"/>
    </location>
</feature>
<feature type="glycosylation site" description="O-linked (GlcNAc...) serine" evidence="21 22">
    <location>
        <position position="80"/>
    </location>
</feature>
<feature type="glycosylation site" description="O-linked (GlcNAc...) serine" evidence="21 22">
    <location>
        <position position="82"/>
    </location>
</feature>
<feature type="glycosylation site" description="O-linked (GlcNAc...) serine" evidence="21 22">
    <location>
        <position position="94"/>
    </location>
</feature>
<feature type="glycosylation site" description="O-linked (GlcNAc...) serine" evidence="21 22">
    <location>
        <position position="100"/>
    </location>
</feature>
<feature type="glycosylation site" description="O-linked (GlcNAc...) serine" evidence="21 22">
    <location>
        <position position="108"/>
    </location>
</feature>
<feature type="glycosylation site" description="O-linked (GlcNAc...) serine" evidence="21 22">
    <location>
        <position position="110"/>
    </location>
</feature>
<feature type="glycosylation site" description="O-linked (GlcNAc...) serine" evidence="21 22">
    <location>
        <position position="118"/>
    </location>
</feature>
<feature type="glycosylation site" description="O-linked (GlcNAc...) serine" evidence="21 22">
    <location>
        <position position="120"/>
    </location>
</feature>
<feature type="glycosylation site" description="O-linked (GlcNAc...) serine" evidence="21 22">
    <location>
        <position position="121"/>
    </location>
</feature>
<feature type="mutagenesis site" description="No longer cleaved in vitro by human furin protease." evidence="10">
    <original>RRKR</original>
    <variation>SRKS</variation>
    <location>
        <begin position="165"/>
        <end position="168"/>
    </location>
</feature>
<feature type="mutagenesis site" description="No change in binding of BR (187-385) to host keratin 10 (KRT10)." evidence="8">
    <original>K</original>
    <variation>A</variation>
    <location>
        <position position="230"/>
    </location>
</feature>
<feature type="mutagenesis site" description="About 20% binding of BR to host KRT10." evidence="8">
    <original>M</original>
    <variation>A</variation>
    <location>
        <position position="276"/>
    </location>
</feature>
<feature type="mutagenesis site" description="About 20% binding of BR to host KRT10." evidence="8">
    <original>V</original>
    <variation>A</variation>
    <location>
        <position position="289"/>
    </location>
</feature>
<feature type="mutagenesis site" description="About 20% binding of BR to host KRT10." evidence="8">
    <original>I</original>
    <variation>A</variation>
    <location>
        <position position="293"/>
    </location>
</feature>
<feature type="mutagenesis site" description="50% binding of BR to host KRT10." evidence="8">
    <original>Y</original>
    <variation>A</variation>
    <location>
        <position position="304"/>
    </location>
</feature>
<feature type="mutagenesis site" description="40% binding of BR to host KRT10." evidence="8">
    <original>M</original>
    <variation>A</variation>
    <location>
        <position position="309"/>
    </location>
</feature>
<feature type="mutagenesis site" description="About 20% binding of BR to host KRT10." evidence="8">
    <original>Y</original>
    <variation>A</variation>
    <location>
        <position position="316"/>
    </location>
</feature>
<feature type="mutagenesis site" description="About 20% binding of BR to host KRT10." evidence="8">
    <original>W</original>
    <variation>A</variation>
    <location>
        <position position="318"/>
    </location>
</feature>
<feature type="mutagenesis site" description="No change in binding of BR to host KRT10." evidence="8">
    <original>N</original>
    <variation>A</variation>
    <location>
        <position position="320"/>
    </location>
</feature>
<feature type="mutagenesis site" description="About 20% binding of BR to host KRT10." evidence="8">
    <original>M</original>
    <variation>A</variation>
    <location>
        <position position="324"/>
    </location>
</feature>
<feature type="mutagenesis site" description="About 20% binding of BR to host KRT10." evidence="8">
    <original>F</original>
    <variation>A</variation>
    <location>
        <position position="328"/>
    </location>
</feature>
<feature type="strand" evidence="26">
    <location>
        <begin position="208"/>
        <end position="218"/>
    </location>
</feature>
<feature type="turn" evidence="26">
    <location>
        <begin position="219"/>
        <end position="222"/>
    </location>
</feature>
<feature type="strand" evidence="26">
    <location>
        <begin position="223"/>
        <end position="233"/>
    </location>
</feature>
<feature type="strand" evidence="26">
    <location>
        <begin position="235"/>
        <end position="247"/>
    </location>
</feature>
<feature type="turn" evidence="26">
    <location>
        <begin position="249"/>
        <end position="251"/>
    </location>
</feature>
<feature type="strand" evidence="26">
    <location>
        <begin position="265"/>
        <end position="269"/>
    </location>
</feature>
<feature type="strand" evidence="26">
    <location>
        <begin position="277"/>
        <end position="279"/>
    </location>
</feature>
<feature type="strand" evidence="26">
    <location>
        <begin position="289"/>
        <end position="294"/>
    </location>
</feature>
<feature type="strand" evidence="26">
    <location>
        <begin position="300"/>
        <end position="307"/>
    </location>
</feature>
<feature type="strand" evidence="26">
    <location>
        <begin position="309"/>
        <end position="311"/>
    </location>
</feature>
<feature type="strand" evidence="26">
    <location>
        <begin position="313"/>
        <end position="318"/>
    </location>
</feature>
<feature type="strand" evidence="26">
    <location>
        <begin position="323"/>
        <end position="325"/>
    </location>
</feature>
<feature type="helix" evidence="26">
    <location>
        <begin position="326"/>
        <end position="329"/>
    </location>
</feature>
<feature type="turn" evidence="26">
    <location>
        <begin position="330"/>
        <end position="332"/>
    </location>
</feature>
<feature type="strand" evidence="26">
    <location>
        <begin position="334"/>
        <end position="343"/>
    </location>
</feature>
<feature type="strand" evidence="26">
    <location>
        <begin position="350"/>
        <end position="352"/>
    </location>
</feature>
<feature type="strand" evidence="27">
    <location>
        <begin position="357"/>
        <end position="360"/>
    </location>
</feature>
<feature type="turn" evidence="26">
    <location>
        <begin position="366"/>
        <end position="370"/>
    </location>
</feature>
<feature type="strand" evidence="26">
    <location>
        <begin position="373"/>
        <end position="375"/>
    </location>
</feature>
<comment type="function">
    <text evidence="4 5 6 7 10">Protein that allows bacteria to adhere to mammalian host cells. Required for full virulence in mouse infection models when infected intranasally (PubMed:16861665). Required for adhesion to host cells in vitro and for persistence in the lower respiratory tract (PubMed:18507531). Binds host keratin 10 (KRT10) on lung cells which mediates adhesion via the C-terminus of the basic region (BR, residues 273-341); glycosylation of either protein is not required for the interaction (PubMed:19627498). A region in the N-terminus (residues 122-166) self aggregates, contributing to mature biofilm formation (PubMed:20714350). The basic region (BR, residues 187-385) also self aggregates; the BR binds DNA which enhances self aggregation (PubMed:27582320).</text>
</comment>
<comment type="subunit">
    <text evidence="6 8">Binds to human and mouse protein keratin 10 (KRT10).</text>
</comment>
<comment type="subcellular location">
    <subcellularLocation>
        <location evidence="1 6">Secreted</location>
        <location evidence="1 6">Cell wall</location>
        <topology evidence="1">Peptidoglycan-anchor</topology>
    </subcellularLocation>
    <subcellularLocation>
        <location evidence="6">Cell surface</location>
    </subcellularLocation>
</comment>
<comment type="induction">
    <text evidence="6 7">Expressed in exponential phase (at protein level) (PubMed:19627498). About 47-fold induced during biofilm formation versus planktonic (in liquid culture) (PubMed:20714350).</text>
</comment>
<comment type="domain">
    <text evidence="3 5 6 7 8 10 16 19 20">Has 3 domains; serine-rich repeat region 1 (SRR1) with 8 imperfect repeats of the sequence SASASAST, a basic region (BR) and serine-rich repeat region 2 (SRR2) with 539 imperfect repeats of the sequence SASASAST (Probable) (PubMed:11463916). A construct expressing SRR1 plus BR binds to a human pneumocyte cell line and prevents bacteria binding to human pneumocyte cells in a dose-dependent manner; antibodies against the same domain partially inhibit host cell adherence (PubMed:18507531). The BR domain mediates host cell adhesion; its deletion prevents binding to unencapsulated host cells. A BR subdomain (residues 273-341) binds to host keratin 10 (KRT10) (PubMed:19627498). The KRT10-binding subdomain forms a compressed barrel, which probably binds the C-terminus of KRT10 via a series of ordered loops (PubMed:24430336). The SRR2 domain probably extends the BR domain outside of the bacterial capsular polysaccharide, possibly by forming a long filament (Probable). The BR domain is also required for PsrP to be able to mediate biofilm formation. A subdomain (residues 122-166) binds to itself, suggesting it may be responsible for self aggregation; self interaction occurs whether the protein is glycosylated or not. The self aggregation and K10 subdomains function independently of each other (PubMed:20714350). Another subfragment of the BR domain (residues 187-385) binds DNA and may be important in self aggregation (PubMed:27582320). The predicted pI of the basic region is 9.91 (PubMed:19202081).</text>
</comment>
<comment type="PTM">
    <text evidence="6 9 11">Glycosylated (PubMed:19627498). Only truncated substrates greater than 25 residues long are glycosylated by the Gtf1-Gtf2 complex in vitro; only Ser residues have been seen to be glycosylated. Based on electrophoretic mobility it is probable that most of the Ser residues in SSR1 and SSR2 are O-GlcNAcylated (PubMed:24936067). Subsequent glycosylation by up to 7 sugar transferases (Gtf3 and GlyAT, GlyB, GlyD, GlyE, GlyF and GlyG) is able to generate very high sugar polymorphism (PubMed:28246170).</text>
</comment>
<comment type="PTM">
    <text evidence="10">Can be cleaved by human furin protease; this fragment contributes to self-aggregation and possibly biofilm formation in vitro.</text>
</comment>
<comment type="disruption phenotype">
    <text evidence="4 5 7 12">Significantly improved survival of intranasally infected female BALB/cJ mice; bacteria infect nasal tissues normally but do not progress into the blood (PubMed:16861665). Single deletion or deletion of 15 genes (from psrP, SP_1772 to SP_1756, includes the accessory Sec export proteins SecA2 and SecY2) and infection of female BALB/cJ mice, shows the psrP-secY2A2 region is required for lung infection and for infection to progress to blood. Mice infected intraperitoneally with either deletion showed wild-type infection. Both deletions have decreased adherence to lung but not pharynx or brain cells. The psrP-secY2A2 region deletion has no effect on bacterial growth rate, capsule levels, autolysis, or transformation (PubMed:18507531). About 5-fold decreased aggregation of bacteria in infected mouse nasopharynx and lung tissue. In vitro, significantly decreased mature biofilm formation is seen; the large deletion mutant (SP_1772 to SP_1756) is no more affected than the single psrP deletion. Biofilm formation is partially restored by a truncated PsrP (residues 1-734); the BR domain is required for this partial restoration (PubMed:20714350). About 60% decreased biofilm formation, no change in adherence to human lung pneumocytes (PubMed:28456649).</text>
</comment>
<comment type="biotechnology">
    <text evidence="6">Mice vaccinated with residues 72-395 were protected against subsequent infection, suggesting this would be a good candidate for vaccine inclusion.</text>
</comment>
<comment type="miscellaneous">
    <text evidence="5 7 13 14 17">Encoded in RD10, a pathogenicity island with an atypical GC content that is associated with invasive pneumococcal disease. Pathogenicity islands account for greater than half the genomic diversity observed between isolates (PubMed:11463916, PubMed:16861665, PubMed:19627498). The main function of this island seems to be correct synthesis and export of this protein (PubMed:18507531, PubMed:20714350).</text>
</comment>
<comment type="miscellaneous">
    <text evidence="15">Normally a commensal colonizing bacteria of the nasopharynx, invasive pneumococcal disease (IPD) is characterized by bacterial spread from the nasopharynx to normally sterile sites such as the lungs, blood, and brain. The young, the elderly and the immunocompromised are at greatest risk for IPD.</text>
</comment>
<comment type="similarity">
    <text evidence="18">Belongs to the serine-rich repeat protein (SRRP) family.</text>
</comment>
<comment type="caution">
    <text evidence="9 11">O-glycosylation sites are annotated in SSR1 only. Residues at similar position are probably glycosylated in SRR2 also. Experimental sites were determined in a synthetic peptide glycosylated by addition of GlcNAc in vitro by GtfA-GtfB; only 13 of 26 possible Ser and no Thr were modified with GlcNAc in this experiment (PubMed:24936067). The GlcNAc residues are subsequently further modified but the positions were not proven in that experiment (PubMed:28246170).</text>
</comment>
<reference key="1">
    <citation type="journal article" date="2001" name="Science">
        <title>Complete genome sequence of a virulent isolate of Streptococcus pneumoniae.</title>
        <authorList>
            <person name="Tettelin H."/>
            <person name="Nelson K.E."/>
            <person name="Paulsen I.T."/>
            <person name="Eisen J.A."/>
            <person name="Read T.D."/>
            <person name="Peterson S.N."/>
            <person name="Heidelberg J.F."/>
            <person name="DeBoy R.T."/>
            <person name="Haft D.H."/>
            <person name="Dodson R.J."/>
            <person name="Durkin A.S."/>
            <person name="Gwinn M.L."/>
            <person name="Kolonay J.F."/>
            <person name="Nelson W.C."/>
            <person name="Peterson J.D."/>
            <person name="Umayam L.A."/>
            <person name="White O."/>
            <person name="Salzberg S.L."/>
            <person name="Lewis M.R."/>
            <person name="Radune D."/>
            <person name="Holtzapple E.K."/>
            <person name="Khouri H.M."/>
            <person name="Wolf A.M."/>
            <person name="Utterback T.R."/>
            <person name="Hansen C.L."/>
            <person name="McDonald L.A."/>
            <person name="Feldblyum T.V."/>
            <person name="Angiuoli S.V."/>
            <person name="Dickinson T."/>
            <person name="Hickey E.K."/>
            <person name="Holt I.E."/>
            <person name="Loftus B.J."/>
            <person name="Yang F."/>
            <person name="Smith H.O."/>
            <person name="Venter J.C."/>
            <person name="Dougherty B.A."/>
            <person name="Morrison D.A."/>
            <person name="Hollingshead S.K."/>
            <person name="Fraser C.M."/>
        </authorList>
    </citation>
    <scope>NUCLEOTIDE SEQUENCE [LARGE SCALE GENOMIC DNA]</scope>
    <scope>DISCUSSION OF SEQUENCE</scope>
    <scope>DOMAIN</scope>
    <source>
        <strain>ATCC BAA-334 / TIGR4</strain>
    </source>
</reference>
<reference key="2">
    <citation type="journal article" date="2006" name="Infect. Immun.">
        <title>Identification of a candidate Streptococcus pneumoniae core genome and regions of diversity correlated with invasive pneumococcal disease.</title>
        <authorList>
            <person name="Obert C."/>
            <person name="Sublett J."/>
            <person name="Kaushal D."/>
            <person name="Hinojosa E."/>
            <person name="Barton T."/>
            <person name="Tuomanen E.I."/>
            <person name="Orihuela C.J."/>
        </authorList>
    </citation>
    <scope>FUNCTION</scope>
    <scope>DOMAIN</scope>
    <scope>DISRUPTION PHENOTYPE</scope>
    <source>
        <strain>ATCC BAA-334 / TIGR4</strain>
    </source>
</reference>
<reference key="3">
    <citation type="journal article" date="2008" name="J. Infect. Dis.">
        <title>Antibodies against PsrP, a novel Streptococcus pneumoniae adhesin, block adhesion and protect mice against pneumococcal challenge.</title>
        <authorList>
            <person name="Rose L."/>
            <person name="Shivshankar P."/>
            <person name="Hinojosa E."/>
            <person name="Rodriguez A."/>
            <person name="Sanchez C.J."/>
            <person name="Orihuela C.J."/>
        </authorList>
    </citation>
    <scope>FUNCTION IN HOST CELL ADHERENCE</scope>
    <scope>DOMAIN</scope>
    <scope>DISRUPTION PHENOTYPE</scope>
    <source>
        <strain>ATCC BAA-334 / TIGR4</strain>
    </source>
</reference>
<reference key="4">
    <citation type="journal article" date="2009" name="Microbiology">
        <title>Glycosylation and biogenesis of a family of serine-rich bacterial adhesins.</title>
        <authorList>
            <person name="Zhou M."/>
            <person name="Wu H."/>
        </authorList>
    </citation>
    <scope>DISCUSSION OF SEQUENCE</scope>
</reference>
<reference key="5">
    <citation type="journal article" date="2009" name="Mol. Microbiol.">
        <title>The Streptococcus pneumoniae adhesin PsrP binds to keratin 10 on lung cells.</title>
        <authorList>
            <person name="Shivshankar P."/>
            <person name="Sanchez C."/>
            <person name="Rose L.F."/>
            <person name="Orihuela C.J."/>
        </authorList>
    </citation>
    <scope>FUNCTION</scope>
    <scope>INTERACTION WITH HUMAN AND MOUSE KERATIN 10</scope>
    <scope>SUBCELLULAR LOCATION</scope>
    <scope>INDUCTION</scope>
    <scope>GLYCOSYLATION</scope>
    <scope>DOMAIN</scope>
    <scope>BIOTECHNOLOGY</scope>
    <source>
        <strain>ATCC BAA-334 / TIGR4</strain>
    </source>
</reference>
<reference key="6">
    <citation type="journal article" date="2010" name="PLoS Pathog.">
        <title>The pneumococcal serine-rich repeat protein is an intra-species bacterial adhesin that promotes bacterial aggregation in vivo and in biofilms.</title>
        <authorList>
            <person name="Sanchez C.J."/>
            <person name="Shivshankar P."/>
            <person name="Stol K."/>
            <person name="Trakhtenbroit S."/>
            <person name="Sullam P.M."/>
            <person name="Sauer K."/>
            <person name="Hermans P.W."/>
            <person name="Orihuela C.J."/>
        </authorList>
    </citation>
    <scope>FUNCTION IN BIOFILM FORMATION</scope>
    <scope>INDUCTION DURING BIOFILM FORMATION</scope>
    <scope>DOMAIN</scope>
    <scope>DISRUPTION PHENOTYPE</scope>
    <source>
        <strain>ATCC BAA-334 / TIGR4</strain>
    </source>
</reference>
<reference key="7">
    <citation type="journal article" date="2014" name="J. Biol. Chem.">
        <title>Structure of a novel O-linked N-acetyl-D-glucosamine (O-GlcNAc) transferase, GtfA, reveals insights into the glycosylation of pneumococcal serine-rich repeat adhesins.</title>
        <authorList>
            <person name="Shi W.W."/>
            <person name="Jiang Y.L."/>
            <person name="Zhu F."/>
            <person name="Yang Y.H."/>
            <person name="Shao Q.Y."/>
            <person name="Yang H.B."/>
            <person name="Ren Y.M."/>
            <person name="Wu H."/>
            <person name="Chen Y."/>
            <person name="Zhou C.Z."/>
        </authorList>
    </citation>
    <scope>GLYCOSYLATION AT SER-73; SER-75; SER-76; SER-78; SER-80; SER-82; SER-94; SER-100; SER-108; SER-110; SER-118; SER-120 AND SER-121</scope>
    <source>
        <strain>ATCC BAA-334 / TIGR4</strain>
    </source>
</reference>
<reference key="8">
    <citation type="journal article" date="2017" name="Microbes Infect.">
        <title>The accessory Sec system (SecY2A2) in Streptococcus pneumoniae is involved in export of pneumolysin toxin, adhesion and biofilm formation.</title>
        <authorList>
            <person name="Bandara M."/>
            <person name="Skehel J.M."/>
            <person name="Kadioglu A."/>
            <person name="Collinson I."/>
            <person name="Nobbs A.H."/>
            <person name="Blocker A.J."/>
            <person name="Jenkinson H.F."/>
        </authorList>
    </citation>
    <scope>DISRUPTION PHENOTYPE</scope>
    <source>
        <strain>ATCC BAA-334 / TIGR4</strain>
    </source>
</reference>
<reference key="9">
    <citation type="journal article" date="2017" name="J. Biol. Chem.">
        <title>Defining the enzymatic pathway for polymorphic O-glycosylation of the pneumococcal serine-rich repeat protein PsrP.</title>
        <authorList>
            <person name="Jiang Y.L."/>
            <person name="Jin H."/>
            <person name="Yang H.B."/>
            <person name="Zhao R.L."/>
            <person name="Wang S."/>
            <person name="Chen Y."/>
            <person name="Zhou C.Z."/>
        </authorList>
    </citation>
    <scope>COMPLEX GLYCOSYLATION</scope>
    <source>
        <strain>ATCC BAA-334 / TIGR4</strain>
    </source>
</reference>
<reference evidence="23 24" key="10">
    <citation type="journal article" date="2014" name="Open Biol.">
        <title>The basic keratin 10-binding domain of the virulence-associated pneumococcal serine-rich protein PsrP adopts a novel MSCRAMM fold.</title>
        <authorList>
            <person name="Schulte T."/>
            <person name="Lofling J."/>
            <person name="Mikaelsson C."/>
            <person name="Kikhney A."/>
            <person name="Hentrich K."/>
            <person name="Diamante A."/>
            <person name="Ebel C."/>
            <person name="Normark S."/>
            <person name="Svergun D."/>
            <person name="Henriques-Normark B."/>
            <person name="Achour A."/>
        </authorList>
    </citation>
    <scope>X-RAY CRYSTALLOGRAPHY (2.00 ANGSTROMS) OF 187-385</scope>
    <scope>INTERACTION WITH HUMAN KERATIN 10</scope>
    <scope>DOMAIN</scope>
    <scope>MUTAGENESIS OF LYS-230; MET-276; VAL-289; ILE-293; TYR-304; MET-309; TYR-316; TRP-318; ASN-320; MET-324 AND PHE-328</scope>
    <source>
        <strain>ATCC BAA-334 / TIGR4</strain>
    </source>
</reference>
<reference key="11">
    <citation type="journal article" date="2014" name="Open Biol.">
        <authorList>
            <person name="Schulte T."/>
            <person name="Lofling J."/>
            <person name="Mikaelsson C."/>
            <person name="Kikhney A."/>
            <person name="Hentrich K."/>
            <person name="Diamante A."/>
            <person name="Ebel C."/>
            <person name="Normark S."/>
            <person name="Svergun D."/>
            <person name="Henriques-Normark B."/>
            <person name="Achour A."/>
        </authorList>
    </citation>
    <scope>ERRATUM OF PUBMED:24430336</scope>
</reference>
<reference evidence="25" key="12">
    <citation type="journal article" date="2016" name="Sci. Rep.">
        <title>The BR domain of PsrP interacts with extracellular DNA to promote bacterial aggregation; structural insights into pneumococcal biofilm formation.</title>
        <authorList>
            <person name="Schulte T."/>
            <person name="Mikaelsson C."/>
            <person name="Beaussart A."/>
            <person name="Kikhney A."/>
            <person name="Deshmukh M."/>
            <person name="Wolniak S."/>
            <person name="Pathak A."/>
            <person name="Ebel C."/>
            <person name="Lofling J."/>
            <person name="Fogolari F."/>
            <person name="Henriques-Normark B."/>
            <person name="Dufrene Y.F."/>
            <person name="Svergun D."/>
            <person name="Nygren P.A."/>
            <person name="Achour A."/>
        </authorList>
    </citation>
    <scope>X-RAY CRYSTALLOGRAPHY (2.10 ANGSTROMS) OF 187-378</scope>
    <scope>FUNCTION</scope>
    <scope>DOMAIN</scope>
    <scope>DNA-BINDING</scope>
    <scope>PROTEOLYTIC CLEAVAGE BY HOST FURIN</scope>
    <scope>MUTAGENESIS OF 165-ARG--ARG-168</scope>
    <source>
        <strain>ATCC BAA-334 / TIGR4</strain>
    </source>
</reference>
<accession>A0A0H2URK1</accession>
<name>PSRP_STRPN</name>